<proteinExistence type="predicted"/>
<sequence length="183" mass="21488">MKTCFLSIWRVVDPIYFFFSRLSLIDNDQKSVFRVRLTKYKGHHVVLSDGTHIRKNDVLVKIHLHNIKLIRELQSIESAVRKGIIIYQKVYQSMPLLLDYINNHKKSEKIKGIIGITMLDKGVERLGFDVITPVNPFYRCFKKVSHVPILYLTSKPVSLRHLPNSSYLFISKEKLQKTYQKKD</sequence>
<gene>
    <name type="primary">ykoP</name>
    <name type="ordered locus">BSU13360</name>
</gene>
<accession>O34495</accession>
<organism>
    <name type="scientific">Bacillus subtilis (strain 168)</name>
    <dbReference type="NCBI Taxonomy" id="224308"/>
    <lineage>
        <taxon>Bacteria</taxon>
        <taxon>Bacillati</taxon>
        <taxon>Bacillota</taxon>
        <taxon>Bacilli</taxon>
        <taxon>Bacillales</taxon>
        <taxon>Bacillaceae</taxon>
        <taxon>Bacillus</taxon>
    </lineage>
</organism>
<feature type="chain" id="PRO_0000049609" description="Uncharacterized protein YkoP">
    <location>
        <begin position="1"/>
        <end position="183"/>
    </location>
</feature>
<feature type="sequence conflict" description="In Ref. 1; CAA05613." evidence="1" ref="1">
    <original>Q</original>
    <variation>P</variation>
    <location>
        <position position="92"/>
    </location>
</feature>
<feature type="sequence conflict" description="In Ref. 1; CAA05613." evidence="1" ref="1">
    <original>IIG</original>
    <variation>NHW</variation>
    <location>
        <begin position="113"/>
        <end position="115"/>
    </location>
</feature>
<dbReference type="EMBL" id="AJ002571">
    <property type="protein sequence ID" value="CAA05613.1"/>
    <property type="molecule type" value="Genomic_DNA"/>
</dbReference>
<dbReference type="EMBL" id="AL009126">
    <property type="protein sequence ID" value="CAB13193.2"/>
    <property type="molecule type" value="Genomic_DNA"/>
</dbReference>
<dbReference type="PIR" id="C69860">
    <property type="entry name" value="C69860"/>
</dbReference>
<dbReference type="RefSeq" id="NP_389219.2">
    <property type="nucleotide sequence ID" value="NC_000964.3"/>
</dbReference>
<dbReference type="RefSeq" id="WP_003245777.1">
    <property type="nucleotide sequence ID" value="NZ_OZ025638.1"/>
</dbReference>
<dbReference type="FunCoup" id="O34495">
    <property type="interactions" value="115"/>
</dbReference>
<dbReference type="STRING" id="224308.BSU13360"/>
<dbReference type="PaxDb" id="224308-BSU13360"/>
<dbReference type="EnsemblBacteria" id="CAB13193">
    <property type="protein sequence ID" value="CAB13193"/>
    <property type="gene ID" value="BSU_13360"/>
</dbReference>
<dbReference type="GeneID" id="936444"/>
<dbReference type="KEGG" id="bsu:BSU13360"/>
<dbReference type="PATRIC" id="fig|224308.179.peg.1451"/>
<dbReference type="eggNOG" id="COG0726">
    <property type="taxonomic scope" value="Bacteria"/>
</dbReference>
<dbReference type="InParanoid" id="O34495"/>
<dbReference type="OrthoDB" id="1951946at2"/>
<dbReference type="BioCyc" id="BSUB:BSU13360-MONOMER"/>
<dbReference type="Proteomes" id="UP000001570">
    <property type="component" value="Chromosome"/>
</dbReference>
<dbReference type="InterPro" id="IPR054467">
    <property type="entry name" value="YkoP-like_dom"/>
</dbReference>
<dbReference type="Pfam" id="PF22790">
    <property type="entry name" value="YkoP"/>
    <property type="match status" value="1"/>
</dbReference>
<protein>
    <recommendedName>
        <fullName>Uncharacterized protein YkoP</fullName>
    </recommendedName>
</protein>
<reference key="1">
    <citation type="submission" date="1997-11" db="EMBL/GenBank/DDBJ databases">
        <title>Sequence of the Bacillus subtilis genome between xlyA and ykoR.</title>
        <authorList>
            <person name="Devine K.M."/>
        </authorList>
    </citation>
    <scope>NUCLEOTIDE SEQUENCE [GENOMIC DNA]</scope>
    <source>
        <strain>168</strain>
    </source>
</reference>
<reference key="2">
    <citation type="journal article" date="1997" name="Nature">
        <title>The complete genome sequence of the Gram-positive bacterium Bacillus subtilis.</title>
        <authorList>
            <person name="Kunst F."/>
            <person name="Ogasawara N."/>
            <person name="Moszer I."/>
            <person name="Albertini A.M."/>
            <person name="Alloni G."/>
            <person name="Azevedo V."/>
            <person name="Bertero M.G."/>
            <person name="Bessieres P."/>
            <person name="Bolotin A."/>
            <person name="Borchert S."/>
            <person name="Borriss R."/>
            <person name="Boursier L."/>
            <person name="Brans A."/>
            <person name="Braun M."/>
            <person name="Brignell S.C."/>
            <person name="Bron S."/>
            <person name="Brouillet S."/>
            <person name="Bruschi C.V."/>
            <person name="Caldwell B."/>
            <person name="Capuano V."/>
            <person name="Carter N.M."/>
            <person name="Choi S.-K."/>
            <person name="Codani J.-J."/>
            <person name="Connerton I.F."/>
            <person name="Cummings N.J."/>
            <person name="Daniel R.A."/>
            <person name="Denizot F."/>
            <person name="Devine K.M."/>
            <person name="Duesterhoeft A."/>
            <person name="Ehrlich S.D."/>
            <person name="Emmerson P.T."/>
            <person name="Entian K.-D."/>
            <person name="Errington J."/>
            <person name="Fabret C."/>
            <person name="Ferrari E."/>
            <person name="Foulger D."/>
            <person name="Fritz C."/>
            <person name="Fujita M."/>
            <person name="Fujita Y."/>
            <person name="Fuma S."/>
            <person name="Galizzi A."/>
            <person name="Galleron N."/>
            <person name="Ghim S.-Y."/>
            <person name="Glaser P."/>
            <person name="Goffeau A."/>
            <person name="Golightly E.J."/>
            <person name="Grandi G."/>
            <person name="Guiseppi G."/>
            <person name="Guy B.J."/>
            <person name="Haga K."/>
            <person name="Haiech J."/>
            <person name="Harwood C.R."/>
            <person name="Henaut A."/>
            <person name="Hilbert H."/>
            <person name="Holsappel S."/>
            <person name="Hosono S."/>
            <person name="Hullo M.-F."/>
            <person name="Itaya M."/>
            <person name="Jones L.-M."/>
            <person name="Joris B."/>
            <person name="Karamata D."/>
            <person name="Kasahara Y."/>
            <person name="Klaerr-Blanchard M."/>
            <person name="Klein C."/>
            <person name="Kobayashi Y."/>
            <person name="Koetter P."/>
            <person name="Koningstein G."/>
            <person name="Krogh S."/>
            <person name="Kumano M."/>
            <person name="Kurita K."/>
            <person name="Lapidus A."/>
            <person name="Lardinois S."/>
            <person name="Lauber J."/>
            <person name="Lazarevic V."/>
            <person name="Lee S.-M."/>
            <person name="Levine A."/>
            <person name="Liu H."/>
            <person name="Masuda S."/>
            <person name="Mauel C."/>
            <person name="Medigue C."/>
            <person name="Medina N."/>
            <person name="Mellado R.P."/>
            <person name="Mizuno M."/>
            <person name="Moestl D."/>
            <person name="Nakai S."/>
            <person name="Noback M."/>
            <person name="Noone D."/>
            <person name="O'Reilly M."/>
            <person name="Ogawa K."/>
            <person name="Ogiwara A."/>
            <person name="Oudega B."/>
            <person name="Park S.-H."/>
            <person name="Parro V."/>
            <person name="Pohl T.M."/>
            <person name="Portetelle D."/>
            <person name="Porwollik S."/>
            <person name="Prescott A.M."/>
            <person name="Presecan E."/>
            <person name="Pujic P."/>
            <person name="Purnelle B."/>
            <person name="Rapoport G."/>
            <person name="Rey M."/>
            <person name="Reynolds S."/>
            <person name="Rieger M."/>
            <person name="Rivolta C."/>
            <person name="Rocha E."/>
            <person name="Roche B."/>
            <person name="Rose M."/>
            <person name="Sadaie Y."/>
            <person name="Sato T."/>
            <person name="Scanlan E."/>
            <person name="Schleich S."/>
            <person name="Schroeter R."/>
            <person name="Scoffone F."/>
            <person name="Sekiguchi J."/>
            <person name="Sekowska A."/>
            <person name="Seror S.J."/>
            <person name="Serror P."/>
            <person name="Shin B.-S."/>
            <person name="Soldo B."/>
            <person name="Sorokin A."/>
            <person name="Tacconi E."/>
            <person name="Takagi T."/>
            <person name="Takahashi H."/>
            <person name="Takemaru K."/>
            <person name="Takeuchi M."/>
            <person name="Tamakoshi A."/>
            <person name="Tanaka T."/>
            <person name="Terpstra P."/>
            <person name="Tognoni A."/>
            <person name="Tosato V."/>
            <person name="Uchiyama S."/>
            <person name="Vandenbol M."/>
            <person name="Vannier F."/>
            <person name="Vassarotti A."/>
            <person name="Viari A."/>
            <person name="Wambutt R."/>
            <person name="Wedler E."/>
            <person name="Wedler H."/>
            <person name="Weitzenegger T."/>
            <person name="Winters P."/>
            <person name="Wipat A."/>
            <person name="Yamamoto H."/>
            <person name="Yamane K."/>
            <person name="Yasumoto K."/>
            <person name="Yata K."/>
            <person name="Yoshida K."/>
            <person name="Yoshikawa H.-F."/>
            <person name="Zumstein E."/>
            <person name="Yoshikawa H."/>
            <person name="Danchin A."/>
        </authorList>
    </citation>
    <scope>NUCLEOTIDE SEQUENCE [LARGE SCALE GENOMIC DNA]</scope>
    <source>
        <strain>168</strain>
    </source>
</reference>
<reference key="3">
    <citation type="journal article" date="2009" name="Microbiology">
        <title>From a consortium sequence to a unified sequence: the Bacillus subtilis 168 reference genome a decade later.</title>
        <authorList>
            <person name="Barbe V."/>
            <person name="Cruveiller S."/>
            <person name="Kunst F."/>
            <person name="Lenoble P."/>
            <person name="Meurice G."/>
            <person name="Sekowska A."/>
            <person name="Vallenet D."/>
            <person name="Wang T."/>
            <person name="Moszer I."/>
            <person name="Medigue C."/>
            <person name="Danchin A."/>
        </authorList>
    </citation>
    <scope>SEQUENCE REVISION TO 92 AND 113-115</scope>
</reference>
<keyword id="KW-1185">Reference proteome</keyword>
<name>YKOP_BACSU</name>
<evidence type="ECO:0000305" key="1"/>